<accession>P80270</accession>
<keyword id="KW-0007">Acetylation</keyword>
<keyword id="KW-0903">Direct protein sequencing</keyword>
<keyword id="KW-0349">Heme</keyword>
<keyword id="KW-0408">Iron</keyword>
<keyword id="KW-0479">Metal-binding</keyword>
<keyword id="KW-0561">Oxygen transport</keyword>
<keyword id="KW-0813">Transport</keyword>
<reference key="1">
    <citation type="journal article" date="1993" name="Eur. J. Biochem.">
        <title>A polymerising Root-effect fish hemoglobin with high subunit heterogeneity. Correlation with primary structure.</title>
        <authorList>
            <person name="Fago A."/>
            <person name="Romano M."/>
            <person name="Tamburrini M."/>
            <person name="Coletta M."/>
            <person name="D'Avino R."/>
            <person name="di Prisco G."/>
        </authorList>
    </citation>
    <scope>PROTEIN SEQUENCE</scope>
    <scope>ACETYLATION AT SER-1</scope>
    <scope>FUNCTION</scope>
    <scope>SUBUNIT</scope>
</reference>
<gene>
    <name type="primary">hba</name>
</gene>
<feature type="chain" id="PRO_0000052598" description="Hemoglobin subunit alpha">
    <location>
        <begin position="1"/>
        <end position="142"/>
    </location>
</feature>
<feature type="domain" description="Globin" evidence="1">
    <location>
        <begin position="1"/>
        <end position="142"/>
    </location>
</feature>
<feature type="binding site" evidence="1">
    <location>
        <position position="59"/>
    </location>
    <ligand>
        <name>O2</name>
        <dbReference type="ChEBI" id="CHEBI:15379"/>
    </ligand>
</feature>
<feature type="binding site" description="proximal binding residue" evidence="1">
    <location>
        <position position="88"/>
    </location>
    <ligand>
        <name>heme b</name>
        <dbReference type="ChEBI" id="CHEBI:60344"/>
    </ligand>
    <ligandPart>
        <name>Fe</name>
        <dbReference type="ChEBI" id="CHEBI:18248"/>
    </ligandPart>
</feature>
<feature type="modified residue" description="N-acetylserine" evidence="2">
    <location>
        <position position="1"/>
    </location>
</feature>
<organism>
    <name type="scientific">Chelidonichthys kumu</name>
    <name type="common">Bluefin gurnard</name>
    <name type="synonym">Trigla kumu</name>
    <dbReference type="NCBI Taxonomy" id="334942"/>
    <lineage>
        <taxon>Eukaryota</taxon>
        <taxon>Metazoa</taxon>
        <taxon>Chordata</taxon>
        <taxon>Craniata</taxon>
        <taxon>Vertebrata</taxon>
        <taxon>Euteleostomi</taxon>
        <taxon>Actinopterygii</taxon>
        <taxon>Neopterygii</taxon>
        <taxon>Teleostei</taxon>
        <taxon>Neoteleostei</taxon>
        <taxon>Acanthomorphata</taxon>
        <taxon>Eupercaria</taxon>
        <taxon>Perciformes</taxon>
        <taxon>Triglioidei</taxon>
        <taxon>Triglidae</taxon>
        <taxon>Chelidonichthys</taxon>
    </lineage>
</organism>
<comment type="function">
    <text evidence="2">Involved in oxygen transport from gills to the various peripheral tissues.</text>
</comment>
<comment type="subunit">
    <text evidence="2">Heterotetramer of two alpha chains and two beta chains. Can form polymers.</text>
</comment>
<comment type="tissue specificity">
    <text>Red blood cells.</text>
</comment>
<comment type="miscellaneous">
    <text>Displays a strong alkaline Bohr effect, and at low pH exhibits the reduced ligand affinity and cooperativity that comprise the Root effect.</text>
</comment>
<comment type="similarity">
    <text evidence="1">Belongs to the globin family.</text>
</comment>
<proteinExistence type="evidence at protein level"/>
<dbReference type="PIR" id="S43022">
    <property type="entry name" value="S43022"/>
</dbReference>
<dbReference type="SMR" id="P80270"/>
<dbReference type="iPTMnet" id="P80270"/>
<dbReference type="GO" id="GO:0072562">
    <property type="term" value="C:blood microparticle"/>
    <property type="evidence" value="ECO:0007669"/>
    <property type="project" value="TreeGrafter"/>
</dbReference>
<dbReference type="GO" id="GO:0031838">
    <property type="term" value="C:haptoglobin-hemoglobin complex"/>
    <property type="evidence" value="ECO:0007669"/>
    <property type="project" value="TreeGrafter"/>
</dbReference>
<dbReference type="GO" id="GO:0005833">
    <property type="term" value="C:hemoglobin complex"/>
    <property type="evidence" value="ECO:0007669"/>
    <property type="project" value="InterPro"/>
</dbReference>
<dbReference type="GO" id="GO:0031720">
    <property type="term" value="F:haptoglobin binding"/>
    <property type="evidence" value="ECO:0007669"/>
    <property type="project" value="TreeGrafter"/>
</dbReference>
<dbReference type="GO" id="GO:0020037">
    <property type="term" value="F:heme binding"/>
    <property type="evidence" value="ECO:0007669"/>
    <property type="project" value="InterPro"/>
</dbReference>
<dbReference type="GO" id="GO:0005506">
    <property type="term" value="F:iron ion binding"/>
    <property type="evidence" value="ECO:0007669"/>
    <property type="project" value="InterPro"/>
</dbReference>
<dbReference type="GO" id="GO:0043177">
    <property type="term" value="F:organic acid binding"/>
    <property type="evidence" value="ECO:0007669"/>
    <property type="project" value="TreeGrafter"/>
</dbReference>
<dbReference type="GO" id="GO:0019825">
    <property type="term" value="F:oxygen binding"/>
    <property type="evidence" value="ECO:0007669"/>
    <property type="project" value="InterPro"/>
</dbReference>
<dbReference type="GO" id="GO:0005344">
    <property type="term" value="F:oxygen carrier activity"/>
    <property type="evidence" value="ECO:0007669"/>
    <property type="project" value="UniProtKB-KW"/>
</dbReference>
<dbReference type="GO" id="GO:0004601">
    <property type="term" value="F:peroxidase activity"/>
    <property type="evidence" value="ECO:0007669"/>
    <property type="project" value="TreeGrafter"/>
</dbReference>
<dbReference type="GO" id="GO:0042744">
    <property type="term" value="P:hydrogen peroxide catabolic process"/>
    <property type="evidence" value="ECO:0007669"/>
    <property type="project" value="TreeGrafter"/>
</dbReference>
<dbReference type="CDD" id="cd08927">
    <property type="entry name" value="Hb-alpha-like"/>
    <property type="match status" value="1"/>
</dbReference>
<dbReference type="FunFam" id="1.10.490.10:FF:000002">
    <property type="entry name" value="Hemoglobin subunit alpha"/>
    <property type="match status" value="1"/>
</dbReference>
<dbReference type="Gene3D" id="1.10.490.10">
    <property type="entry name" value="Globins"/>
    <property type="match status" value="1"/>
</dbReference>
<dbReference type="InterPro" id="IPR000971">
    <property type="entry name" value="Globin"/>
</dbReference>
<dbReference type="InterPro" id="IPR009050">
    <property type="entry name" value="Globin-like_sf"/>
</dbReference>
<dbReference type="InterPro" id="IPR012292">
    <property type="entry name" value="Globin/Proto"/>
</dbReference>
<dbReference type="InterPro" id="IPR002338">
    <property type="entry name" value="Hemoglobin_a-typ"/>
</dbReference>
<dbReference type="InterPro" id="IPR050056">
    <property type="entry name" value="Hemoglobin_oxygen_transport"/>
</dbReference>
<dbReference type="InterPro" id="IPR002339">
    <property type="entry name" value="Hemoglobin_pi"/>
</dbReference>
<dbReference type="PANTHER" id="PTHR11442">
    <property type="entry name" value="HEMOGLOBIN FAMILY MEMBER"/>
    <property type="match status" value="1"/>
</dbReference>
<dbReference type="PANTHER" id="PTHR11442:SF41">
    <property type="entry name" value="HEMOGLOBIN SUBUNIT ZETA"/>
    <property type="match status" value="1"/>
</dbReference>
<dbReference type="Pfam" id="PF00042">
    <property type="entry name" value="Globin"/>
    <property type="match status" value="1"/>
</dbReference>
<dbReference type="PRINTS" id="PR00612">
    <property type="entry name" value="ALPHAHAEM"/>
</dbReference>
<dbReference type="PRINTS" id="PR00815">
    <property type="entry name" value="PIHAEM"/>
</dbReference>
<dbReference type="SUPFAM" id="SSF46458">
    <property type="entry name" value="Globin-like"/>
    <property type="match status" value="1"/>
</dbReference>
<dbReference type="PROSITE" id="PS01033">
    <property type="entry name" value="GLOBIN"/>
    <property type="match status" value="1"/>
</dbReference>
<name>HBA_CHEKU</name>
<protein>
    <recommendedName>
        <fullName>Hemoglobin subunit alpha</fullName>
    </recommendedName>
    <alternativeName>
        <fullName>Alpha-globin</fullName>
    </alternativeName>
    <alternativeName>
        <fullName>Hemoglobin alpha chain</fullName>
    </alternativeName>
</protein>
<sequence>SLSDKDKNTVRALWAKISKSADVIGAEALARMLTVYPQTKTYFTHWTDLSPSSTSVKNHGKNIMVGVSLAVSKMDDLTAGLLELSEKHAFQLRVDPANFKLLSHCLLVVISIMFPKEFGPEVHVSVDKFFANLALALSERYR</sequence>
<evidence type="ECO:0000255" key="1">
    <source>
        <dbReference type="PROSITE-ProRule" id="PRU00238"/>
    </source>
</evidence>
<evidence type="ECO:0000269" key="2">
    <source>
    </source>
</evidence>